<comment type="function">
    <text evidence="1">Required for maturation of urease via the functional incorporation of the urease nickel metallocenter.</text>
</comment>
<comment type="subunit">
    <text evidence="1">UreD, UreF and UreG form a complex that acts as a GTP-hydrolysis-dependent molecular chaperone, activating the urease apoprotein by helping to assemble the nickel containing metallocenter of UreC. The UreE protein probably delivers the nickel.</text>
</comment>
<comment type="subcellular location">
    <subcellularLocation>
        <location evidence="1">Cytoplasm</location>
    </subcellularLocation>
</comment>
<comment type="similarity">
    <text evidence="1">Belongs to the UreF family.</text>
</comment>
<gene>
    <name evidence="1" type="primary">ureF</name>
    <name type="ordered locus">Mlg_0186</name>
</gene>
<reference key="1">
    <citation type="submission" date="2006-08" db="EMBL/GenBank/DDBJ databases">
        <title>Complete sequence of Alkalilimnicola ehrilichei MLHE-1.</title>
        <authorList>
            <person name="Copeland A."/>
            <person name="Lucas S."/>
            <person name="Lapidus A."/>
            <person name="Barry K."/>
            <person name="Detter J.C."/>
            <person name="Glavina del Rio T."/>
            <person name="Hammon N."/>
            <person name="Israni S."/>
            <person name="Dalin E."/>
            <person name="Tice H."/>
            <person name="Pitluck S."/>
            <person name="Sims D."/>
            <person name="Brettin T."/>
            <person name="Bruce D."/>
            <person name="Han C."/>
            <person name="Tapia R."/>
            <person name="Gilna P."/>
            <person name="Schmutz J."/>
            <person name="Larimer F."/>
            <person name="Land M."/>
            <person name="Hauser L."/>
            <person name="Kyrpides N."/>
            <person name="Mikhailova N."/>
            <person name="Oremland R.S."/>
            <person name="Hoeft S.E."/>
            <person name="Switzer-Blum J."/>
            <person name="Kulp T."/>
            <person name="King G."/>
            <person name="Tabita R."/>
            <person name="Witte B."/>
            <person name="Santini J.M."/>
            <person name="Basu P."/>
            <person name="Hollibaugh J.T."/>
            <person name="Xie G."/>
            <person name="Stolz J.F."/>
            <person name="Richardson P."/>
        </authorList>
    </citation>
    <scope>NUCLEOTIDE SEQUENCE [LARGE SCALE GENOMIC DNA]</scope>
    <source>
        <strain>ATCC BAA-1101 / DSM 17681 / MLHE-1</strain>
    </source>
</reference>
<evidence type="ECO:0000255" key="1">
    <source>
        <dbReference type="HAMAP-Rule" id="MF_01385"/>
    </source>
</evidence>
<sequence length="228" mass="25107">MSTETNPGLAQRRLWQLISPTLPIGAYSYSAGLEYAVEAGWLRNADAVADWLQGQLHHALAPVDIPALARLHAAWQSDDAVAVHYWSQWLRACRETKELREEDRHVGQALARLLRDLDLPEAAPWVDDPIAGWPTLYALAVARWAIPLETAAEAYLWAWCENQVSAAIKLVPLGQTAGQRLLLEMAEPVGEAARQGLALEDEEMGGGLPGVALASSLHETQYSRLFRS</sequence>
<organism>
    <name type="scientific">Alkalilimnicola ehrlichii (strain ATCC BAA-1101 / DSM 17681 / MLHE-1)</name>
    <dbReference type="NCBI Taxonomy" id="187272"/>
    <lineage>
        <taxon>Bacteria</taxon>
        <taxon>Pseudomonadati</taxon>
        <taxon>Pseudomonadota</taxon>
        <taxon>Gammaproteobacteria</taxon>
        <taxon>Chromatiales</taxon>
        <taxon>Ectothiorhodospiraceae</taxon>
        <taxon>Alkalilimnicola</taxon>
    </lineage>
</organism>
<keyword id="KW-0143">Chaperone</keyword>
<keyword id="KW-0963">Cytoplasm</keyword>
<keyword id="KW-0996">Nickel insertion</keyword>
<keyword id="KW-1185">Reference proteome</keyword>
<dbReference type="EMBL" id="CP000453">
    <property type="protein sequence ID" value="ABI55541.1"/>
    <property type="molecule type" value="Genomic_DNA"/>
</dbReference>
<dbReference type="RefSeq" id="WP_011627937.1">
    <property type="nucleotide sequence ID" value="NC_008340.1"/>
</dbReference>
<dbReference type="SMR" id="Q0AC96"/>
<dbReference type="KEGG" id="aeh:Mlg_0186"/>
<dbReference type="eggNOG" id="COG0830">
    <property type="taxonomic scope" value="Bacteria"/>
</dbReference>
<dbReference type="HOGENOM" id="CLU_049215_2_1_6"/>
<dbReference type="OrthoDB" id="9798772at2"/>
<dbReference type="Proteomes" id="UP000001962">
    <property type="component" value="Chromosome"/>
</dbReference>
<dbReference type="GO" id="GO:0005737">
    <property type="term" value="C:cytoplasm"/>
    <property type="evidence" value="ECO:0007669"/>
    <property type="project" value="UniProtKB-SubCell"/>
</dbReference>
<dbReference type="GO" id="GO:0016151">
    <property type="term" value="F:nickel cation binding"/>
    <property type="evidence" value="ECO:0007669"/>
    <property type="project" value="UniProtKB-UniRule"/>
</dbReference>
<dbReference type="Gene3D" id="1.10.4190.10">
    <property type="entry name" value="Urease accessory protein UreF"/>
    <property type="match status" value="1"/>
</dbReference>
<dbReference type="HAMAP" id="MF_01385">
    <property type="entry name" value="UreF"/>
    <property type="match status" value="1"/>
</dbReference>
<dbReference type="InterPro" id="IPR002639">
    <property type="entry name" value="UreF"/>
</dbReference>
<dbReference type="InterPro" id="IPR038277">
    <property type="entry name" value="UreF_sf"/>
</dbReference>
<dbReference type="PANTHER" id="PTHR33620">
    <property type="entry name" value="UREASE ACCESSORY PROTEIN F"/>
    <property type="match status" value="1"/>
</dbReference>
<dbReference type="PANTHER" id="PTHR33620:SF1">
    <property type="entry name" value="UREASE ACCESSORY PROTEIN F"/>
    <property type="match status" value="1"/>
</dbReference>
<dbReference type="Pfam" id="PF01730">
    <property type="entry name" value="UreF"/>
    <property type="match status" value="1"/>
</dbReference>
<dbReference type="PIRSF" id="PIRSF009467">
    <property type="entry name" value="Ureas_acces_UreF"/>
    <property type="match status" value="1"/>
</dbReference>
<proteinExistence type="inferred from homology"/>
<accession>Q0AC96</accession>
<protein>
    <recommendedName>
        <fullName evidence="1">Urease accessory protein UreF</fullName>
    </recommendedName>
</protein>
<name>UREF_ALKEH</name>
<feature type="chain" id="PRO_0000344069" description="Urease accessory protein UreF">
    <location>
        <begin position="1"/>
        <end position="228"/>
    </location>
</feature>